<accession>Q3Z2H0</accession>
<organism>
    <name type="scientific">Shigella sonnei (strain Ss046)</name>
    <dbReference type="NCBI Taxonomy" id="300269"/>
    <lineage>
        <taxon>Bacteria</taxon>
        <taxon>Pseudomonadati</taxon>
        <taxon>Pseudomonadota</taxon>
        <taxon>Gammaproteobacteria</taxon>
        <taxon>Enterobacterales</taxon>
        <taxon>Enterobacteriaceae</taxon>
        <taxon>Shigella</taxon>
    </lineage>
</organism>
<reference key="1">
    <citation type="journal article" date="2005" name="Nucleic Acids Res.">
        <title>Genome dynamics and diversity of Shigella species, the etiologic agents of bacillary dysentery.</title>
        <authorList>
            <person name="Yang F."/>
            <person name="Yang J."/>
            <person name="Zhang X."/>
            <person name="Chen L."/>
            <person name="Jiang Y."/>
            <person name="Yan Y."/>
            <person name="Tang X."/>
            <person name="Wang J."/>
            <person name="Xiong Z."/>
            <person name="Dong J."/>
            <person name="Xue Y."/>
            <person name="Zhu Y."/>
            <person name="Xu X."/>
            <person name="Sun L."/>
            <person name="Chen S."/>
            <person name="Nie H."/>
            <person name="Peng J."/>
            <person name="Xu J."/>
            <person name="Wang Y."/>
            <person name="Yuan Z."/>
            <person name="Wen Y."/>
            <person name="Yao Z."/>
            <person name="Shen Y."/>
            <person name="Qiang B."/>
            <person name="Hou Y."/>
            <person name="Yu J."/>
            <person name="Jin Q."/>
        </authorList>
    </citation>
    <scope>NUCLEOTIDE SEQUENCE [LARGE SCALE GENOMIC DNA]</scope>
    <source>
        <strain>Ss046</strain>
    </source>
</reference>
<feature type="chain" id="PRO_0000303101" description="RNA chaperone ProQ">
    <location>
        <begin position="1"/>
        <end position="232"/>
    </location>
</feature>
<feature type="region of interest" description="Disordered" evidence="2">
    <location>
        <begin position="105"/>
        <end position="182"/>
    </location>
</feature>
<feature type="compositionally biased region" description="Basic and acidic residues" evidence="2">
    <location>
        <begin position="117"/>
        <end position="136"/>
    </location>
</feature>
<feature type="compositionally biased region" description="Basic residues" evidence="2">
    <location>
        <begin position="137"/>
        <end position="146"/>
    </location>
</feature>
<feature type="compositionally biased region" description="Basic and acidic residues" evidence="2">
    <location>
        <begin position="147"/>
        <end position="177"/>
    </location>
</feature>
<sequence length="232" mass="25862">MENQPKLNSSKEVIAFLAERFPHCFSAEGEARPLKIGIFQDLVDRVAGEMNLSKTQLRSALRLYTSSWRYLYGVKPGATRVDLDGNPCGELDEQHVEHARKQLEEAKARVQAQRAEQQAKKREAAAAAGEKEDAPRRERKPRPTTPRRKEGAERKPRAQKPVEKAPKTVKAPREEQHTPVSDISALTVGQALKVKAGQNAMDATVLEITKDGVRVQLNSGMSLIVRAEHLVF</sequence>
<keyword id="KW-0143">Chaperone</keyword>
<keyword id="KW-0963">Cytoplasm</keyword>
<keyword id="KW-1185">Reference proteome</keyword>
<keyword id="KW-0694">RNA-binding</keyword>
<dbReference type="EMBL" id="CP000038">
    <property type="protein sequence ID" value="AAZ88042.1"/>
    <property type="molecule type" value="Genomic_DNA"/>
</dbReference>
<dbReference type="RefSeq" id="WP_000431370.1">
    <property type="nucleotide sequence ID" value="NC_007384.1"/>
</dbReference>
<dbReference type="SMR" id="Q3Z2H0"/>
<dbReference type="GeneID" id="93776081"/>
<dbReference type="KEGG" id="ssn:SSON_1330"/>
<dbReference type="HOGENOM" id="CLU_113254_0_0_6"/>
<dbReference type="Proteomes" id="UP000002529">
    <property type="component" value="Chromosome"/>
</dbReference>
<dbReference type="GO" id="GO:0005829">
    <property type="term" value="C:cytosol"/>
    <property type="evidence" value="ECO:0007669"/>
    <property type="project" value="TreeGrafter"/>
</dbReference>
<dbReference type="GO" id="GO:0033592">
    <property type="term" value="F:RNA strand annealing activity"/>
    <property type="evidence" value="ECO:0007669"/>
    <property type="project" value="UniProtKB-UniRule"/>
</dbReference>
<dbReference type="GO" id="GO:0034057">
    <property type="term" value="F:RNA strand-exchange activity"/>
    <property type="evidence" value="ECO:0007669"/>
    <property type="project" value="UniProtKB-UniRule"/>
</dbReference>
<dbReference type="GO" id="GO:0010608">
    <property type="term" value="P:post-transcriptional regulation of gene expression"/>
    <property type="evidence" value="ECO:0007669"/>
    <property type="project" value="InterPro"/>
</dbReference>
<dbReference type="FunFam" id="1.10.1710.10:FF:000001">
    <property type="entry name" value="RNA chaperone ProQ"/>
    <property type="match status" value="1"/>
</dbReference>
<dbReference type="Gene3D" id="1.10.1710.10">
    <property type="entry name" value="ProQ/FinO domain"/>
    <property type="match status" value="1"/>
</dbReference>
<dbReference type="HAMAP" id="MF_00749">
    <property type="entry name" value="ProQ"/>
    <property type="match status" value="1"/>
</dbReference>
<dbReference type="InterPro" id="IPR023529">
    <property type="entry name" value="ProQ"/>
</dbReference>
<dbReference type="InterPro" id="IPR016103">
    <property type="entry name" value="ProQ/FinO"/>
</dbReference>
<dbReference type="InterPro" id="IPR036442">
    <property type="entry name" value="ProQ/FinO_sf"/>
</dbReference>
<dbReference type="InterPro" id="IPR035236">
    <property type="entry name" value="ProQ_C"/>
</dbReference>
<dbReference type="NCBIfam" id="NF003434">
    <property type="entry name" value="PRK04950.1"/>
    <property type="match status" value="1"/>
</dbReference>
<dbReference type="PANTHER" id="PTHR38106">
    <property type="entry name" value="RNA CHAPERONE PROQ"/>
    <property type="match status" value="1"/>
</dbReference>
<dbReference type="PANTHER" id="PTHR38106:SF1">
    <property type="entry name" value="RNA CHAPERONE PROQ"/>
    <property type="match status" value="1"/>
</dbReference>
<dbReference type="Pfam" id="PF04352">
    <property type="entry name" value="ProQ"/>
    <property type="match status" value="1"/>
</dbReference>
<dbReference type="Pfam" id="PF17516">
    <property type="entry name" value="ProQ_C"/>
    <property type="match status" value="1"/>
</dbReference>
<dbReference type="SMART" id="SM00945">
    <property type="entry name" value="ProQ"/>
    <property type="match status" value="1"/>
</dbReference>
<dbReference type="SUPFAM" id="SSF48657">
    <property type="entry name" value="FinO-like"/>
    <property type="match status" value="1"/>
</dbReference>
<gene>
    <name evidence="1" type="primary">proQ</name>
    <name type="ordered locus">SSON_1330</name>
</gene>
<name>PROQ_SHISS</name>
<evidence type="ECO:0000255" key="1">
    <source>
        <dbReference type="HAMAP-Rule" id="MF_00749"/>
    </source>
</evidence>
<evidence type="ECO:0000256" key="2">
    <source>
        <dbReference type="SAM" id="MobiDB-lite"/>
    </source>
</evidence>
<comment type="function">
    <text evidence="1">RNA chaperone with significant RNA binding, RNA strand exchange and RNA duplexing activities. May regulate ProP activity through an RNA-based, post-transcriptional mechanism.</text>
</comment>
<comment type="subcellular location">
    <subcellularLocation>
        <location evidence="1">Cytoplasm</location>
    </subcellularLocation>
</comment>
<comment type="similarity">
    <text evidence="1">Belongs to the ProQ family.</text>
</comment>
<protein>
    <recommendedName>
        <fullName evidence="1">RNA chaperone ProQ</fullName>
    </recommendedName>
</protein>
<proteinExistence type="inferred from homology"/>